<name>PME8_ARATH</name>
<reference key="1">
    <citation type="journal article" date="2000" name="Nature">
        <title>Sequence and analysis of chromosome 1 of the plant Arabidopsis thaliana.</title>
        <authorList>
            <person name="Theologis A."/>
            <person name="Ecker J.R."/>
            <person name="Palm C.J."/>
            <person name="Federspiel N.A."/>
            <person name="Kaul S."/>
            <person name="White O."/>
            <person name="Alonso J."/>
            <person name="Altafi H."/>
            <person name="Araujo R."/>
            <person name="Bowman C.L."/>
            <person name="Brooks S.Y."/>
            <person name="Buehler E."/>
            <person name="Chan A."/>
            <person name="Chao Q."/>
            <person name="Chen H."/>
            <person name="Cheuk R.F."/>
            <person name="Chin C.W."/>
            <person name="Chung M.K."/>
            <person name="Conn L."/>
            <person name="Conway A.B."/>
            <person name="Conway A.R."/>
            <person name="Creasy T.H."/>
            <person name="Dewar K."/>
            <person name="Dunn P."/>
            <person name="Etgu P."/>
            <person name="Feldblyum T.V."/>
            <person name="Feng J.-D."/>
            <person name="Fong B."/>
            <person name="Fujii C.Y."/>
            <person name="Gill J.E."/>
            <person name="Goldsmith A.D."/>
            <person name="Haas B."/>
            <person name="Hansen N.F."/>
            <person name="Hughes B."/>
            <person name="Huizar L."/>
            <person name="Hunter J.L."/>
            <person name="Jenkins J."/>
            <person name="Johnson-Hopson C."/>
            <person name="Khan S."/>
            <person name="Khaykin E."/>
            <person name="Kim C.J."/>
            <person name="Koo H.L."/>
            <person name="Kremenetskaia I."/>
            <person name="Kurtz D.B."/>
            <person name="Kwan A."/>
            <person name="Lam B."/>
            <person name="Langin-Hooper S."/>
            <person name="Lee A."/>
            <person name="Lee J.M."/>
            <person name="Lenz C.A."/>
            <person name="Li J.H."/>
            <person name="Li Y.-P."/>
            <person name="Lin X."/>
            <person name="Liu S.X."/>
            <person name="Liu Z.A."/>
            <person name="Luros J.S."/>
            <person name="Maiti R."/>
            <person name="Marziali A."/>
            <person name="Militscher J."/>
            <person name="Miranda M."/>
            <person name="Nguyen M."/>
            <person name="Nierman W.C."/>
            <person name="Osborne B.I."/>
            <person name="Pai G."/>
            <person name="Peterson J."/>
            <person name="Pham P.K."/>
            <person name="Rizzo M."/>
            <person name="Rooney T."/>
            <person name="Rowley D."/>
            <person name="Sakano H."/>
            <person name="Salzberg S.L."/>
            <person name="Schwartz J.R."/>
            <person name="Shinn P."/>
            <person name="Southwick A.M."/>
            <person name="Sun H."/>
            <person name="Tallon L.J."/>
            <person name="Tambunga G."/>
            <person name="Toriumi M.J."/>
            <person name="Town C.D."/>
            <person name="Utterback T."/>
            <person name="Van Aken S."/>
            <person name="Vaysberg M."/>
            <person name="Vysotskaia V.S."/>
            <person name="Walker M."/>
            <person name="Wu D."/>
            <person name="Yu G."/>
            <person name="Fraser C.M."/>
            <person name="Venter J.C."/>
            <person name="Davis R.W."/>
        </authorList>
    </citation>
    <scope>NUCLEOTIDE SEQUENCE [LARGE SCALE GENOMIC DNA]</scope>
    <source>
        <strain>cv. Columbia</strain>
    </source>
</reference>
<reference key="2">
    <citation type="journal article" date="2017" name="Plant J.">
        <title>Araport11: a complete reannotation of the Arabidopsis thaliana reference genome.</title>
        <authorList>
            <person name="Cheng C.Y."/>
            <person name="Krishnakumar V."/>
            <person name="Chan A.P."/>
            <person name="Thibaud-Nissen F."/>
            <person name="Schobel S."/>
            <person name="Town C.D."/>
        </authorList>
    </citation>
    <scope>GENOME REANNOTATION</scope>
    <source>
        <strain>cv. Columbia</strain>
    </source>
</reference>
<reference key="3">
    <citation type="journal article" date="2004" name="Carbohydr. Res.">
        <title>Pectin methylesterases: sequence-structural features and phylogenetic relationships.</title>
        <authorList>
            <person name="Markovic O."/>
            <person name="Janecek S."/>
        </authorList>
    </citation>
    <scope>GENE FAMILY</scope>
    <scope>NOMENCLATURE</scope>
</reference>
<reference key="4">
    <citation type="journal article" date="2006" name="Planta">
        <title>Comprehensive expression profiling of the pectin methylesterase gene family during silique development in Arabidopsis thaliana.</title>
        <authorList>
            <person name="Louvet R."/>
            <person name="Cavel E."/>
            <person name="Gutierrez L."/>
            <person name="Guenin S."/>
            <person name="Roger D."/>
            <person name="Gillet F."/>
            <person name="Guerineau F."/>
            <person name="Pelloux J."/>
        </authorList>
    </citation>
    <scope>TISSUE SPECIFICITY</scope>
    <scope>DEVELOPMENTAL STAGE</scope>
</reference>
<dbReference type="EC" id="3.1.1.11"/>
<dbReference type="EMBL" id="AC000098">
    <property type="protein sequence ID" value="AAB71446.1"/>
    <property type="status" value="ALT_SEQ"/>
    <property type="molecule type" value="Genomic_DNA"/>
</dbReference>
<dbReference type="EMBL" id="CP002684">
    <property type="protein sequence ID" value="AEE27822.1"/>
    <property type="molecule type" value="Genomic_DNA"/>
</dbReference>
<dbReference type="PIR" id="H86187">
    <property type="entry name" value="H86187"/>
</dbReference>
<dbReference type="RefSeq" id="NP_172023.1">
    <property type="nucleotide sequence ID" value="NM_100410.3"/>
</dbReference>
<dbReference type="SMR" id="O23038"/>
<dbReference type="FunCoup" id="O23038">
    <property type="interactions" value="64"/>
</dbReference>
<dbReference type="STRING" id="3702.O23038"/>
<dbReference type="GlyCosmos" id="O23038">
    <property type="glycosylation" value="10 sites, No reported glycans"/>
</dbReference>
<dbReference type="GlyGen" id="O23038">
    <property type="glycosylation" value="10 sites"/>
</dbReference>
<dbReference type="PaxDb" id="3702-AT1G05310.1"/>
<dbReference type="ProteomicsDB" id="226207"/>
<dbReference type="EnsemblPlants" id="AT1G05310.1">
    <property type="protein sequence ID" value="AT1G05310.1"/>
    <property type="gene ID" value="AT1G05310"/>
</dbReference>
<dbReference type="GeneID" id="837030"/>
<dbReference type="Gramene" id="AT1G05310.1">
    <property type="protein sequence ID" value="AT1G05310.1"/>
    <property type="gene ID" value="AT1G05310"/>
</dbReference>
<dbReference type="KEGG" id="ath:AT1G05310"/>
<dbReference type="Araport" id="AT1G05310"/>
<dbReference type="TAIR" id="AT1G05310"/>
<dbReference type="eggNOG" id="ENOG502QUTX">
    <property type="taxonomic scope" value="Eukaryota"/>
</dbReference>
<dbReference type="HOGENOM" id="CLU_012243_3_0_1"/>
<dbReference type="InParanoid" id="O23038"/>
<dbReference type="OMA" id="TIIWINS"/>
<dbReference type="PhylomeDB" id="O23038"/>
<dbReference type="BioCyc" id="ARA:AT1G05310-MONOMER"/>
<dbReference type="UniPathway" id="UPA00545">
    <property type="reaction ID" value="UER00823"/>
</dbReference>
<dbReference type="PRO" id="PR:O23038"/>
<dbReference type="Proteomes" id="UP000006548">
    <property type="component" value="Chromosome 1"/>
</dbReference>
<dbReference type="ExpressionAtlas" id="O23038">
    <property type="expression patterns" value="baseline and differential"/>
</dbReference>
<dbReference type="GO" id="GO:0005576">
    <property type="term" value="C:extracellular region"/>
    <property type="evidence" value="ECO:0007669"/>
    <property type="project" value="UniProtKB-KW"/>
</dbReference>
<dbReference type="GO" id="GO:0030599">
    <property type="term" value="F:pectinesterase activity"/>
    <property type="evidence" value="ECO:0007669"/>
    <property type="project" value="UniProtKB-EC"/>
</dbReference>
<dbReference type="GO" id="GO:0042545">
    <property type="term" value="P:cell wall modification"/>
    <property type="evidence" value="ECO:0007669"/>
    <property type="project" value="InterPro"/>
</dbReference>
<dbReference type="GO" id="GO:0045490">
    <property type="term" value="P:pectin catabolic process"/>
    <property type="evidence" value="ECO:0007669"/>
    <property type="project" value="UniProtKB-UniPathway"/>
</dbReference>
<dbReference type="FunFam" id="2.160.20.10:FF:000033">
    <property type="entry name" value="Pectinesterase"/>
    <property type="match status" value="1"/>
</dbReference>
<dbReference type="Gene3D" id="2.160.20.10">
    <property type="entry name" value="Single-stranded right-handed beta-helix, Pectin lyase-like"/>
    <property type="match status" value="1"/>
</dbReference>
<dbReference type="InterPro" id="IPR012334">
    <property type="entry name" value="Pectin_lyas_fold"/>
</dbReference>
<dbReference type="InterPro" id="IPR011050">
    <property type="entry name" value="Pectin_lyase_fold/virulence"/>
</dbReference>
<dbReference type="InterPro" id="IPR033131">
    <property type="entry name" value="Pectinesterase_Asp_AS"/>
</dbReference>
<dbReference type="InterPro" id="IPR000070">
    <property type="entry name" value="Pectinesterase_cat"/>
</dbReference>
<dbReference type="PANTHER" id="PTHR31321">
    <property type="entry name" value="ACYL-COA THIOESTER HYDROLASE YBHC-RELATED"/>
    <property type="match status" value="1"/>
</dbReference>
<dbReference type="PANTHER" id="PTHR31321:SF33">
    <property type="entry name" value="PECTINESTERASE 8-RELATED"/>
    <property type="match status" value="1"/>
</dbReference>
<dbReference type="Pfam" id="PF01095">
    <property type="entry name" value="Pectinesterase"/>
    <property type="match status" value="1"/>
</dbReference>
<dbReference type="SUPFAM" id="SSF51126">
    <property type="entry name" value="Pectin lyase-like"/>
    <property type="match status" value="1"/>
</dbReference>
<dbReference type="PROSITE" id="PS00503">
    <property type="entry name" value="PECTINESTERASE_2"/>
    <property type="match status" value="1"/>
</dbReference>
<keyword id="KW-0063">Aspartyl esterase</keyword>
<keyword id="KW-0134">Cell wall</keyword>
<keyword id="KW-0961">Cell wall biogenesis/degradation</keyword>
<keyword id="KW-0325">Glycoprotein</keyword>
<keyword id="KW-0378">Hydrolase</keyword>
<keyword id="KW-1185">Reference proteome</keyword>
<keyword id="KW-0964">Secreted</keyword>
<keyword id="KW-0732">Signal</keyword>
<organism>
    <name type="scientific">Arabidopsis thaliana</name>
    <name type="common">Mouse-ear cress</name>
    <dbReference type="NCBI Taxonomy" id="3702"/>
    <lineage>
        <taxon>Eukaryota</taxon>
        <taxon>Viridiplantae</taxon>
        <taxon>Streptophyta</taxon>
        <taxon>Embryophyta</taxon>
        <taxon>Tracheophyta</taxon>
        <taxon>Spermatophyta</taxon>
        <taxon>Magnoliopsida</taxon>
        <taxon>eudicotyledons</taxon>
        <taxon>Gunneridae</taxon>
        <taxon>Pentapetalae</taxon>
        <taxon>rosids</taxon>
        <taxon>malvids</taxon>
        <taxon>Brassicales</taxon>
        <taxon>Brassicaceae</taxon>
        <taxon>Camelineae</taxon>
        <taxon>Arabidopsis</taxon>
    </lineage>
</organism>
<sequence>MKIISLSISIGIAIIAVLASKTLFKTHPEAFGIKAISYSFKKSLCDHHHHHHHHHHHHHRHKPSDTKRKVSICDDFPKNIPPLDTDTTSYLCVDKNGCCNFTTVQSAVDAVGNFSQRRNVIWINSGMYYEKVVIPKTKPNITLQGQGFDITAIAWNDTAYSANGTFYCATVQVFGSQFVAKNISFMNVAPIPKPGDVGAQAVAIRIAGDESAFVGCGFFGAQDTLHDDRGRHYFKDCYIQGSIDFIFGNAKSLYQDCRIISMANQLSPGSKAVNGAVTANGRSSKDENSGFSFVNCTIGGTGHVWLGRAWRPYSRVVFVSTTMTDVIAPEGWNNFNDPSRDATIFYGEYNCSGPGADMSKRAPYVQKLNETQVALLINTSFIDGDQWLQFSDL</sequence>
<gene>
    <name type="primary">PME8</name>
    <name type="synonym">ARATH2</name>
    <name type="ordered locus">At1g05310</name>
    <name type="ORF">YUP8H12.7</name>
</gene>
<evidence type="ECO:0000250" key="1"/>
<evidence type="ECO:0000255" key="2"/>
<evidence type="ECO:0000255" key="3">
    <source>
        <dbReference type="PROSITE-ProRule" id="PRU10040"/>
    </source>
</evidence>
<evidence type="ECO:0000269" key="4">
    <source>
    </source>
</evidence>
<evidence type="ECO:0000305" key="5"/>
<comment type="function">
    <text evidence="1">Acts in the modification of cell walls via demethylesterification of cell wall pectin.</text>
</comment>
<comment type="catalytic activity">
    <reaction>
        <text>[(1-&gt;4)-alpha-D-galacturonosyl methyl ester](n) + n H2O = [(1-&gt;4)-alpha-D-galacturonosyl](n) + n methanol + n H(+)</text>
        <dbReference type="Rhea" id="RHEA:22380"/>
        <dbReference type="Rhea" id="RHEA-COMP:14570"/>
        <dbReference type="Rhea" id="RHEA-COMP:14573"/>
        <dbReference type="ChEBI" id="CHEBI:15377"/>
        <dbReference type="ChEBI" id="CHEBI:15378"/>
        <dbReference type="ChEBI" id="CHEBI:17790"/>
        <dbReference type="ChEBI" id="CHEBI:140522"/>
        <dbReference type="ChEBI" id="CHEBI:140523"/>
        <dbReference type="EC" id="3.1.1.11"/>
    </reaction>
</comment>
<comment type="pathway">
    <text>Glycan metabolism; pectin degradation; 2-dehydro-3-deoxy-D-gluconate from pectin: step 1/5.</text>
</comment>
<comment type="subcellular location">
    <subcellularLocation>
        <location evidence="1">Secreted</location>
        <location evidence="1">Cell wall</location>
    </subcellularLocation>
</comment>
<comment type="tissue specificity">
    <text evidence="4">Expressed in siliques.</text>
</comment>
<comment type="developmental stage">
    <text evidence="4">Expressed throughout silique development.</text>
</comment>
<comment type="similarity">
    <text evidence="5">Belongs to the pectinesterase family.</text>
</comment>
<comment type="sequence caution" evidence="5">
    <conflict type="erroneous gene model prediction">
        <sequence resource="EMBL-CDS" id="AAB71446"/>
    </conflict>
</comment>
<accession>O23038</accession>
<proteinExistence type="evidence at transcript level"/>
<feature type="signal peptide" evidence="2">
    <location>
        <begin position="1"/>
        <end position="19"/>
    </location>
</feature>
<feature type="chain" id="PRO_0000371665" description="Probable pectinesterase 8">
    <location>
        <begin position="20"/>
        <end position="393"/>
    </location>
</feature>
<feature type="active site" description="Proton donor" evidence="3">
    <location>
        <position position="223"/>
    </location>
</feature>
<feature type="active site" description="Nucleophile" evidence="3">
    <location>
        <position position="244"/>
    </location>
</feature>
<feature type="binding site" evidence="1">
    <location>
        <position position="165"/>
    </location>
    <ligand>
        <name>substrate</name>
    </ligand>
</feature>
<feature type="binding site" evidence="1">
    <location>
        <position position="200"/>
    </location>
    <ligand>
        <name>substrate</name>
    </ligand>
</feature>
<feature type="binding site" evidence="1">
    <location>
        <position position="308"/>
    </location>
    <ligand>
        <name>substrate</name>
    </ligand>
</feature>
<feature type="site" description="Transition state stabilizer" evidence="1">
    <location>
        <position position="222"/>
    </location>
</feature>
<feature type="glycosylation site" description="N-linked (GlcNAc...) asparagine" evidence="2">
    <location>
        <position position="100"/>
    </location>
</feature>
<feature type="glycosylation site" description="N-linked (GlcNAc...) asparagine" evidence="2">
    <location>
        <position position="113"/>
    </location>
</feature>
<feature type="glycosylation site" description="N-linked (GlcNAc...) asparagine" evidence="2">
    <location>
        <position position="140"/>
    </location>
</feature>
<feature type="glycosylation site" description="N-linked (GlcNAc...) asparagine" evidence="2">
    <location>
        <position position="156"/>
    </location>
</feature>
<feature type="glycosylation site" description="N-linked (GlcNAc...) asparagine" evidence="2">
    <location>
        <position position="163"/>
    </location>
</feature>
<feature type="glycosylation site" description="N-linked (GlcNAc...) asparagine" evidence="2">
    <location>
        <position position="182"/>
    </location>
</feature>
<feature type="glycosylation site" description="N-linked (GlcNAc...) asparagine" evidence="2">
    <location>
        <position position="295"/>
    </location>
</feature>
<feature type="glycosylation site" description="N-linked (GlcNAc...) asparagine" evidence="2">
    <location>
        <position position="350"/>
    </location>
</feature>
<feature type="glycosylation site" description="N-linked (GlcNAc...) asparagine" evidence="2">
    <location>
        <position position="369"/>
    </location>
</feature>
<feature type="glycosylation site" description="N-linked (GlcNAc...) asparagine" evidence="2">
    <location>
        <position position="378"/>
    </location>
</feature>
<protein>
    <recommendedName>
        <fullName>Probable pectinesterase 8</fullName>
        <shortName>PE 8</shortName>
        <ecNumber>3.1.1.11</ecNumber>
    </recommendedName>
    <alternativeName>
        <fullName>Pectin methylesterase 2</fullName>
        <shortName>AtPME2</shortName>
    </alternativeName>
    <alternativeName>
        <fullName>Pectin methylesterase 8</fullName>
        <shortName>AtPME8</shortName>
    </alternativeName>
</protein>